<feature type="chain" id="PRO_1000184736" description="ATP synthase subunit delta">
    <location>
        <begin position="1"/>
        <end position="182"/>
    </location>
</feature>
<proteinExistence type="inferred from homology"/>
<gene>
    <name evidence="1" type="primary">atpH</name>
    <name type="ordered locus">LJ_0937</name>
</gene>
<evidence type="ECO:0000255" key="1">
    <source>
        <dbReference type="HAMAP-Rule" id="MF_01416"/>
    </source>
</evidence>
<reference key="1">
    <citation type="journal article" date="2004" name="Proc. Natl. Acad. Sci. U.S.A.">
        <title>The genome sequence of the probiotic intestinal bacterium Lactobacillus johnsonii NCC 533.</title>
        <authorList>
            <person name="Pridmore R.D."/>
            <person name="Berger B."/>
            <person name="Desiere F."/>
            <person name="Vilanova D."/>
            <person name="Barretto C."/>
            <person name="Pittet A.-C."/>
            <person name="Zwahlen M.-C."/>
            <person name="Rouvet M."/>
            <person name="Altermann E."/>
            <person name="Barrangou R."/>
            <person name="Mollet B."/>
            <person name="Mercenier A."/>
            <person name="Klaenhammer T."/>
            <person name="Arigoni F."/>
            <person name="Schell M.A."/>
        </authorList>
    </citation>
    <scope>NUCLEOTIDE SEQUENCE [LARGE SCALE GENOMIC DNA]</scope>
    <source>
        <strain>CNCM I-1225 / La1 / NCC 533</strain>
    </source>
</reference>
<keyword id="KW-0066">ATP synthesis</keyword>
<keyword id="KW-1003">Cell membrane</keyword>
<keyword id="KW-0139">CF(1)</keyword>
<keyword id="KW-0375">Hydrogen ion transport</keyword>
<keyword id="KW-0406">Ion transport</keyword>
<keyword id="KW-0472">Membrane</keyword>
<keyword id="KW-0813">Transport</keyword>
<organism>
    <name type="scientific">Lactobacillus johnsonii (strain CNCM I-12250 / La1 / NCC 533)</name>
    <dbReference type="NCBI Taxonomy" id="257314"/>
    <lineage>
        <taxon>Bacteria</taxon>
        <taxon>Bacillati</taxon>
        <taxon>Bacillota</taxon>
        <taxon>Bacilli</taxon>
        <taxon>Lactobacillales</taxon>
        <taxon>Lactobacillaceae</taxon>
        <taxon>Lactobacillus</taxon>
    </lineage>
</organism>
<sequence length="182" mass="20836">MALSREEIASRYSKALFAYAQDANSLDAVHEDMNVLLQVAKENPDMLRLLSDPIIRKNQKEEFLSSFSDKFSSETKNFLDFLLEYRRFESLTAIIEAFNTLYDEYKNIASGTAVSAIKLNEDELSRISQAYAKKYGFKELILTNKVDPSILGGIILKVGDRIIDGSIRTRLQQIREQLIENR</sequence>
<protein>
    <recommendedName>
        <fullName evidence="1">ATP synthase subunit delta</fullName>
    </recommendedName>
    <alternativeName>
        <fullName evidence="1">ATP synthase F(1) sector subunit delta</fullName>
    </alternativeName>
    <alternativeName>
        <fullName evidence="1">F-type ATPase subunit delta</fullName>
        <shortName evidence="1">F-ATPase subunit delta</shortName>
    </alternativeName>
</protein>
<dbReference type="EMBL" id="AE017198">
    <property type="protein sequence ID" value="AAS08758.1"/>
    <property type="molecule type" value="Genomic_DNA"/>
</dbReference>
<dbReference type="RefSeq" id="WP_004897612.1">
    <property type="nucleotide sequence ID" value="NC_005362.1"/>
</dbReference>
<dbReference type="SMR" id="Q74K18"/>
<dbReference type="KEGG" id="ljo:LJ_0937"/>
<dbReference type="eggNOG" id="COG0712">
    <property type="taxonomic scope" value="Bacteria"/>
</dbReference>
<dbReference type="HOGENOM" id="CLU_085114_4_1_9"/>
<dbReference type="Proteomes" id="UP000000581">
    <property type="component" value="Chromosome"/>
</dbReference>
<dbReference type="GO" id="GO:0005886">
    <property type="term" value="C:plasma membrane"/>
    <property type="evidence" value="ECO:0007669"/>
    <property type="project" value="UniProtKB-SubCell"/>
</dbReference>
<dbReference type="GO" id="GO:0045259">
    <property type="term" value="C:proton-transporting ATP synthase complex"/>
    <property type="evidence" value="ECO:0007669"/>
    <property type="project" value="UniProtKB-KW"/>
</dbReference>
<dbReference type="GO" id="GO:0046933">
    <property type="term" value="F:proton-transporting ATP synthase activity, rotational mechanism"/>
    <property type="evidence" value="ECO:0007669"/>
    <property type="project" value="UniProtKB-UniRule"/>
</dbReference>
<dbReference type="Gene3D" id="1.10.520.20">
    <property type="entry name" value="N-terminal domain of the delta subunit of the F1F0-ATP synthase"/>
    <property type="match status" value="1"/>
</dbReference>
<dbReference type="HAMAP" id="MF_01416">
    <property type="entry name" value="ATP_synth_delta_bact"/>
    <property type="match status" value="1"/>
</dbReference>
<dbReference type="InterPro" id="IPR026015">
    <property type="entry name" value="ATP_synth_OSCP/delta_N_sf"/>
</dbReference>
<dbReference type="InterPro" id="IPR020781">
    <property type="entry name" value="ATPase_OSCP/d_CS"/>
</dbReference>
<dbReference type="InterPro" id="IPR000711">
    <property type="entry name" value="ATPase_OSCP/dsu"/>
</dbReference>
<dbReference type="NCBIfam" id="TIGR01145">
    <property type="entry name" value="ATP_synt_delta"/>
    <property type="match status" value="1"/>
</dbReference>
<dbReference type="NCBIfam" id="NF004403">
    <property type="entry name" value="PRK05758.2-4"/>
    <property type="match status" value="1"/>
</dbReference>
<dbReference type="PANTHER" id="PTHR11910">
    <property type="entry name" value="ATP SYNTHASE DELTA CHAIN"/>
    <property type="match status" value="1"/>
</dbReference>
<dbReference type="Pfam" id="PF00213">
    <property type="entry name" value="OSCP"/>
    <property type="match status" value="1"/>
</dbReference>
<dbReference type="PRINTS" id="PR00125">
    <property type="entry name" value="ATPASEDELTA"/>
</dbReference>
<dbReference type="SUPFAM" id="SSF47928">
    <property type="entry name" value="N-terminal domain of the delta subunit of the F1F0-ATP synthase"/>
    <property type="match status" value="1"/>
</dbReference>
<dbReference type="SUPFAM" id="SSF160527">
    <property type="entry name" value="V-type ATPase subunit E-like"/>
    <property type="match status" value="1"/>
</dbReference>
<dbReference type="PROSITE" id="PS00389">
    <property type="entry name" value="ATPASE_DELTA"/>
    <property type="match status" value="1"/>
</dbReference>
<comment type="function">
    <text evidence="1">F(1)F(0) ATP synthase produces ATP from ADP in the presence of a proton or sodium gradient. F-type ATPases consist of two structural domains, F(1) containing the extramembraneous catalytic core and F(0) containing the membrane proton channel, linked together by a central stalk and a peripheral stalk. During catalysis, ATP synthesis in the catalytic domain of F(1) is coupled via a rotary mechanism of the central stalk subunits to proton translocation.</text>
</comment>
<comment type="function">
    <text evidence="1">This protein is part of the stalk that links CF(0) to CF(1). It either transmits conformational changes from CF(0) to CF(1) or is implicated in proton conduction.</text>
</comment>
<comment type="subunit">
    <text evidence="1">F-type ATPases have 2 components, F(1) - the catalytic core - and F(0) - the membrane proton channel. F(1) has five subunits: alpha(3), beta(3), gamma(1), delta(1), epsilon(1). F(0) has three main subunits: a(1), b(2) and c(10-14). The alpha and beta chains form an alternating ring which encloses part of the gamma chain. F(1) is attached to F(0) by a central stalk formed by the gamma and epsilon chains, while a peripheral stalk is formed by the delta and b chains.</text>
</comment>
<comment type="subcellular location">
    <subcellularLocation>
        <location evidence="1">Cell membrane</location>
        <topology evidence="1">Peripheral membrane protein</topology>
    </subcellularLocation>
</comment>
<comment type="similarity">
    <text evidence="1">Belongs to the ATPase delta chain family.</text>
</comment>
<name>ATPD_LACJO</name>
<accession>Q74K18</accession>